<accession>A1SHX8</accession>
<dbReference type="EMBL" id="CP000509">
    <property type="protein sequence ID" value="ABL81413.1"/>
    <property type="molecule type" value="Genomic_DNA"/>
</dbReference>
<dbReference type="RefSeq" id="WP_011755360.1">
    <property type="nucleotide sequence ID" value="NC_008699.1"/>
</dbReference>
<dbReference type="SMR" id="A1SHX8"/>
<dbReference type="STRING" id="196162.Noca_1903"/>
<dbReference type="KEGG" id="nca:Noca_1903"/>
<dbReference type="eggNOG" id="COG1420">
    <property type="taxonomic scope" value="Bacteria"/>
</dbReference>
<dbReference type="HOGENOM" id="CLU_050019_2_0_11"/>
<dbReference type="OrthoDB" id="9783139at2"/>
<dbReference type="Proteomes" id="UP000000640">
    <property type="component" value="Chromosome"/>
</dbReference>
<dbReference type="GO" id="GO:0003677">
    <property type="term" value="F:DNA binding"/>
    <property type="evidence" value="ECO:0007669"/>
    <property type="project" value="InterPro"/>
</dbReference>
<dbReference type="GO" id="GO:0003700">
    <property type="term" value="F:DNA-binding transcription factor activity"/>
    <property type="evidence" value="ECO:0007669"/>
    <property type="project" value="InterPro"/>
</dbReference>
<dbReference type="GO" id="GO:0045892">
    <property type="term" value="P:negative regulation of DNA-templated transcription"/>
    <property type="evidence" value="ECO:0007669"/>
    <property type="project" value="UniProtKB-UniRule"/>
</dbReference>
<dbReference type="FunFam" id="1.10.10.10:FF:000049">
    <property type="entry name" value="Heat-inducible transcription repressor HrcA"/>
    <property type="match status" value="1"/>
</dbReference>
<dbReference type="Gene3D" id="3.30.450.40">
    <property type="match status" value="1"/>
</dbReference>
<dbReference type="Gene3D" id="3.30.390.60">
    <property type="entry name" value="Heat-inducible transcription repressor hrca homolog, domain 3"/>
    <property type="match status" value="1"/>
</dbReference>
<dbReference type="Gene3D" id="1.10.10.10">
    <property type="entry name" value="Winged helix-like DNA-binding domain superfamily/Winged helix DNA-binding domain"/>
    <property type="match status" value="1"/>
</dbReference>
<dbReference type="HAMAP" id="MF_00081">
    <property type="entry name" value="HrcA"/>
    <property type="match status" value="1"/>
</dbReference>
<dbReference type="InterPro" id="IPR001034">
    <property type="entry name" value="DeoR_HTH"/>
</dbReference>
<dbReference type="InterPro" id="IPR029016">
    <property type="entry name" value="GAF-like_dom_sf"/>
</dbReference>
<dbReference type="InterPro" id="IPR002571">
    <property type="entry name" value="HrcA"/>
</dbReference>
<dbReference type="InterPro" id="IPR021153">
    <property type="entry name" value="HrcA_C"/>
</dbReference>
<dbReference type="InterPro" id="IPR036388">
    <property type="entry name" value="WH-like_DNA-bd_sf"/>
</dbReference>
<dbReference type="InterPro" id="IPR036390">
    <property type="entry name" value="WH_DNA-bd_sf"/>
</dbReference>
<dbReference type="InterPro" id="IPR023120">
    <property type="entry name" value="WHTH_transcript_rep_HrcA_IDD"/>
</dbReference>
<dbReference type="NCBIfam" id="TIGR00331">
    <property type="entry name" value="hrcA"/>
    <property type="match status" value="1"/>
</dbReference>
<dbReference type="PANTHER" id="PTHR34824">
    <property type="entry name" value="HEAT-INDUCIBLE TRANSCRIPTION REPRESSOR HRCA"/>
    <property type="match status" value="1"/>
</dbReference>
<dbReference type="PANTHER" id="PTHR34824:SF1">
    <property type="entry name" value="HEAT-INDUCIBLE TRANSCRIPTION REPRESSOR HRCA"/>
    <property type="match status" value="1"/>
</dbReference>
<dbReference type="Pfam" id="PF01628">
    <property type="entry name" value="HrcA"/>
    <property type="match status" value="1"/>
</dbReference>
<dbReference type="Pfam" id="PF08220">
    <property type="entry name" value="HTH_DeoR"/>
    <property type="match status" value="1"/>
</dbReference>
<dbReference type="PIRSF" id="PIRSF005485">
    <property type="entry name" value="HrcA"/>
    <property type="match status" value="1"/>
</dbReference>
<dbReference type="SUPFAM" id="SSF55781">
    <property type="entry name" value="GAF domain-like"/>
    <property type="match status" value="1"/>
</dbReference>
<dbReference type="SUPFAM" id="SSF46785">
    <property type="entry name" value="Winged helix' DNA-binding domain"/>
    <property type="match status" value="1"/>
</dbReference>
<proteinExistence type="inferred from homology"/>
<gene>
    <name evidence="1" type="primary">hrcA</name>
    <name type="ordered locus">Noca_1903</name>
</gene>
<evidence type="ECO:0000255" key="1">
    <source>
        <dbReference type="HAMAP-Rule" id="MF_00081"/>
    </source>
</evidence>
<protein>
    <recommendedName>
        <fullName evidence="1">Heat-inducible transcription repressor HrcA</fullName>
    </recommendedName>
</protein>
<sequence>MQEERRLAVLRAIVEDYVATEEPVGSKALVERHGLGVSPATVRNDMAALEDEGYITQPHTSAGRVPTDKGYRLFVDRLTTIKPMSTAEKRAIATILDGAIDLDDVVQRSVRLLAQLTRQVAVVQYPTLSRSTVRHIELVALTPTRLLVVLILSTGRVEQRLVDLAAELGEEDLADLRTVVNRAALGEIIADAATALRALVPAEDATPTGAVVDVLVEAMSDHRSDERIAVGGAANLARFGDSFDSAVRPLLEALEEHVVLLKLLGEATAGEILTVRIGHEGPYQELSSTSVVATGYGPGDEALARLGIVGPTRMDYAGSMAAVRAVARYVSRILDEG</sequence>
<name>HRCA_NOCSJ</name>
<reference key="1">
    <citation type="submission" date="2006-12" db="EMBL/GenBank/DDBJ databases">
        <title>Complete sequence of chromosome 1 of Nocardioides sp. JS614.</title>
        <authorList>
            <person name="Copeland A."/>
            <person name="Lucas S."/>
            <person name="Lapidus A."/>
            <person name="Barry K."/>
            <person name="Detter J.C."/>
            <person name="Glavina del Rio T."/>
            <person name="Hammon N."/>
            <person name="Israni S."/>
            <person name="Dalin E."/>
            <person name="Tice H."/>
            <person name="Pitluck S."/>
            <person name="Thompson L.S."/>
            <person name="Brettin T."/>
            <person name="Bruce D."/>
            <person name="Han C."/>
            <person name="Tapia R."/>
            <person name="Schmutz J."/>
            <person name="Larimer F."/>
            <person name="Land M."/>
            <person name="Hauser L."/>
            <person name="Kyrpides N."/>
            <person name="Kim E."/>
            <person name="Mattes T."/>
            <person name="Gossett J."/>
            <person name="Richardson P."/>
        </authorList>
    </citation>
    <scope>NUCLEOTIDE SEQUENCE [LARGE SCALE GENOMIC DNA]</scope>
    <source>
        <strain>ATCC BAA-499 / JS614</strain>
    </source>
</reference>
<comment type="function">
    <text evidence="1">Negative regulator of class I heat shock genes (grpE-dnaK-dnaJ and groELS operons). Prevents heat-shock induction of these operons.</text>
</comment>
<comment type="similarity">
    <text evidence="1">Belongs to the HrcA family.</text>
</comment>
<feature type="chain" id="PRO_1000010438" description="Heat-inducible transcription repressor HrcA">
    <location>
        <begin position="1"/>
        <end position="337"/>
    </location>
</feature>
<keyword id="KW-1185">Reference proteome</keyword>
<keyword id="KW-0678">Repressor</keyword>
<keyword id="KW-0346">Stress response</keyword>
<keyword id="KW-0804">Transcription</keyword>
<keyword id="KW-0805">Transcription regulation</keyword>
<organism>
    <name type="scientific">Nocardioides sp. (strain ATCC BAA-499 / JS614)</name>
    <dbReference type="NCBI Taxonomy" id="196162"/>
    <lineage>
        <taxon>Bacteria</taxon>
        <taxon>Bacillati</taxon>
        <taxon>Actinomycetota</taxon>
        <taxon>Actinomycetes</taxon>
        <taxon>Propionibacteriales</taxon>
        <taxon>Nocardioidaceae</taxon>
        <taxon>Nocardioides</taxon>
    </lineage>
</organism>